<protein>
    <recommendedName>
        <fullName>Cuticle protein AMP5</fullName>
    </recommendedName>
    <alternativeName>
        <fullName>HA-AMP5</fullName>
    </alternativeName>
</protein>
<organism>
    <name type="scientific">Homarus americanus</name>
    <name type="common">American lobster</name>
    <dbReference type="NCBI Taxonomy" id="6706"/>
    <lineage>
        <taxon>Eukaryota</taxon>
        <taxon>Metazoa</taxon>
        <taxon>Ecdysozoa</taxon>
        <taxon>Arthropoda</taxon>
        <taxon>Crustacea</taxon>
        <taxon>Multicrustacea</taxon>
        <taxon>Malacostraca</taxon>
        <taxon>Eumalacostraca</taxon>
        <taxon>Eucarida</taxon>
        <taxon>Decapoda</taxon>
        <taxon>Pleocyemata</taxon>
        <taxon>Astacidea</taxon>
        <taxon>Nephropoidea</taxon>
        <taxon>Nephropidae</taxon>
        <taxon>Homarus</taxon>
    </lineage>
</organism>
<feature type="chain" id="PRO_0000196155" description="Cuticle protein AMP5">
    <location>
        <begin position="1"/>
        <end position="114"/>
    </location>
</feature>
<feature type="domain" description="Chitin-binding type R&amp;R" evidence="1">
    <location>
        <begin position="18"/>
        <end position="83"/>
    </location>
</feature>
<feature type="modified residue" description="Pyrrolidone carboxylic acid" evidence="2">
    <location>
        <position position="1"/>
    </location>
</feature>
<evidence type="ECO:0000255" key="1">
    <source>
        <dbReference type="PROSITE-ProRule" id="PRU00497"/>
    </source>
</evidence>
<evidence type="ECO:0000269" key="2">
    <source>
    </source>
</evidence>
<dbReference type="OrthoDB" id="6359117at2759"/>
<dbReference type="GO" id="GO:0042302">
    <property type="term" value="F:structural constituent of cuticle"/>
    <property type="evidence" value="ECO:0007669"/>
    <property type="project" value="UniProtKB-KW"/>
</dbReference>
<dbReference type="InterPro" id="IPR031311">
    <property type="entry name" value="CHIT_BIND_RR_consensus"/>
</dbReference>
<dbReference type="InterPro" id="IPR000618">
    <property type="entry name" value="Insect_cuticle"/>
</dbReference>
<dbReference type="Pfam" id="PF00379">
    <property type="entry name" value="Chitin_bind_4"/>
    <property type="match status" value="1"/>
</dbReference>
<dbReference type="PROSITE" id="PS00233">
    <property type="entry name" value="CHIT_BIND_RR_1"/>
    <property type="match status" value="1"/>
</dbReference>
<dbReference type="PROSITE" id="PS51155">
    <property type="entry name" value="CHIT_BIND_RR_2"/>
    <property type="match status" value="1"/>
</dbReference>
<proteinExistence type="evidence at protein level"/>
<name>CU05_HOMAM</name>
<keyword id="KW-0193">Cuticle</keyword>
<keyword id="KW-0903">Direct protein sequencing</keyword>
<keyword id="KW-0873">Pyrrolidone carboxylic acid</keyword>
<reference key="1">
    <citation type="journal article" date="1998" name="Comp. Biochem. Physiol.">
        <title>Characterization of exoskeletal proteins from the American lobster, Homarus americanus.</title>
        <authorList>
            <person name="Nousiainen M."/>
            <person name="Rafn K."/>
            <person name="Skou L."/>
            <person name="Roepstorff P."/>
            <person name="Andersen S.O."/>
        </authorList>
    </citation>
    <scope>PROTEIN SEQUENCE</scope>
    <scope>PYROGLUTAMATE FORMATION AT GLN-1</scope>
    <source>
        <tissue>Cuticle</tissue>
    </source>
</reference>
<comment type="tissue specificity">
    <text>Arthrodial membrane.</text>
</comment>
<accession>P81389</accession>
<sequence>QAPKIIETITDNREDDGAGNYFYEFETENGIRQSVRGTPGAAGAVIKTGSFSFPLDDGTLAEFIFEADEYGYRVDSPLIPVAPPNPSHVEELLQIVAQLKAQGAQWNDQGERID</sequence>